<gene>
    <name type="primary">NPF4.3</name>
    <name type="synonym">NRT1.14</name>
    <name type="ordered locus">At1g59740</name>
    <name type="ORF">F23H11.6</name>
</gene>
<protein>
    <recommendedName>
        <fullName>Protein NRT1/ PTR FAMILY 4.3</fullName>
        <shortName>AtNPF4.3</shortName>
    </recommendedName>
    <alternativeName>
        <fullName>Nitrate transporter 1.14</fullName>
    </alternativeName>
</protein>
<organism>
    <name type="scientific">Arabidopsis thaliana</name>
    <name type="common">Mouse-ear cress</name>
    <dbReference type="NCBI Taxonomy" id="3702"/>
    <lineage>
        <taxon>Eukaryota</taxon>
        <taxon>Viridiplantae</taxon>
        <taxon>Streptophyta</taxon>
        <taxon>Embryophyta</taxon>
        <taxon>Tracheophyta</taxon>
        <taxon>Spermatophyta</taxon>
        <taxon>Magnoliopsida</taxon>
        <taxon>eudicotyledons</taxon>
        <taxon>Gunneridae</taxon>
        <taxon>Pentapetalae</taxon>
        <taxon>rosids</taxon>
        <taxon>malvids</taxon>
        <taxon>Brassicales</taxon>
        <taxon>Brassicaceae</taxon>
        <taxon>Camelineae</taxon>
        <taxon>Arabidopsis</taxon>
    </lineage>
</organism>
<dbReference type="EMBL" id="AC007258">
    <property type="protein sequence ID" value="AAD39317.1"/>
    <property type="status" value="ALT_SEQ"/>
    <property type="molecule type" value="Genomic_DNA"/>
</dbReference>
<dbReference type="EMBL" id="CP002684">
    <property type="protein sequence ID" value="AEE33611.1"/>
    <property type="molecule type" value="Genomic_DNA"/>
</dbReference>
<dbReference type="EMBL" id="AY035037">
    <property type="protein sequence ID" value="AAK59542.1"/>
    <property type="molecule type" value="mRNA"/>
</dbReference>
<dbReference type="EMBL" id="AY051041">
    <property type="protein sequence ID" value="AAK93718.1"/>
    <property type="molecule type" value="mRNA"/>
</dbReference>
<dbReference type="PIR" id="C96621">
    <property type="entry name" value="C96621"/>
</dbReference>
<dbReference type="RefSeq" id="NP_176183.1">
    <property type="nucleotide sequence ID" value="NM_104667.3"/>
</dbReference>
<dbReference type="SMR" id="Q93VV5"/>
<dbReference type="FunCoup" id="Q93VV5">
    <property type="interactions" value="634"/>
</dbReference>
<dbReference type="STRING" id="3702.Q93VV5"/>
<dbReference type="iPTMnet" id="Q93VV5"/>
<dbReference type="PaxDb" id="3702-AT1G59740.1"/>
<dbReference type="ProteomicsDB" id="226425"/>
<dbReference type="EnsemblPlants" id="AT1G59740.1">
    <property type="protein sequence ID" value="AT1G59740.1"/>
    <property type="gene ID" value="AT1G59740"/>
</dbReference>
<dbReference type="GeneID" id="842267"/>
<dbReference type="Gramene" id="AT1G59740.1">
    <property type="protein sequence ID" value="AT1G59740.1"/>
    <property type="gene ID" value="AT1G59740"/>
</dbReference>
<dbReference type="KEGG" id="ath:AT1G59740"/>
<dbReference type="Araport" id="AT1G59740"/>
<dbReference type="TAIR" id="AT1G59740">
    <property type="gene designation" value="NPF4.3"/>
</dbReference>
<dbReference type="eggNOG" id="KOG1237">
    <property type="taxonomic scope" value="Eukaryota"/>
</dbReference>
<dbReference type="HOGENOM" id="CLU_009313_4_0_1"/>
<dbReference type="InParanoid" id="Q93VV5"/>
<dbReference type="OMA" id="PRMLHGD"/>
<dbReference type="OrthoDB" id="8904098at2759"/>
<dbReference type="PhylomeDB" id="Q93VV5"/>
<dbReference type="PRO" id="PR:Q93VV5"/>
<dbReference type="Proteomes" id="UP000006548">
    <property type="component" value="Chromosome 1"/>
</dbReference>
<dbReference type="ExpressionAtlas" id="Q93VV5">
    <property type="expression patterns" value="baseline and differential"/>
</dbReference>
<dbReference type="GO" id="GO:0016020">
    <property type="term" value="C:membrane"/>
    <property type="evidence" value="ECO:0007669"/>
    <property type="project" value="UniProtKB-SubCell"/>
</dbReference>
<dbReference type="GO" id="GO:0022857">
    <property type="term" value="F:transmembrane transporter activity"/>
    <property type="evidence" value="ECO:0007669"/>
    <property type="project" value="InterPro"/>
</dbReference>
<dbReference type="GO" id="GO:0006857">
    <property type="term" value="P:oligopeptide transport"/>
    <property type="evidence" value="ECO:0007669"/>
    <property type="project" value="InterPro"/>
</dbReference>
<dbReference type="GO" id="GO:0009624">
    <property type="term" value="P:response to nematode"/>
    <property type="evidence" value="ECO:0007007"/>
    <property type="project" value="TAIR"/>
</dbReference>
<dbReference type="CDD" id="cd17414">
    <property type="entry name" value="MFS_NPF4"/>
    <property type="match status" value="1"/>
</dbReference>
<dbReference type="Gene3D" id="1.20.1250.20">
    <property type="entry name" value="MFS general substrate transporter like domains"/>
    <property type="match status" value="1"/>
</dbReference>
<dbReference type="InterPro" id="IPR036259">
    <property type="entry name" value="MFS_trans_sf"/>
</dbReference>
<dbReference type="InterPro" id="IPR000109">
    <property type="entry name" value="POT_fam"/>
</dbReference>
<dbReference type="InterPro" id="IPR018456">
    <property type="entry name" value="PTR2_symporter_CS"/>
</dbReference>
<dbReference type="PANTHER" id="PTHR11654">
    <property type="entry name" value="OLIGOPEPTIDE TRANSPORTER-RELATED"/>
    <property type="match status" value="1"/>
</dbReference>
<dbReference type="Pfam" id="PF00854">
    <property type="entry name" value="PTR2"/>
    <property type="match status" value="1"/>
</dbReference>
<dbReference type="SUPFAM" id="SSF103473">
    <property type="entry name" value="MFS general substrate transporter"/>
    <property type="match status" value="1"/>
</dbReference>
<dbReference type="PROSITE" id="PS01022">
    <property type="entry name" value="PTR2_1"/>
    <property type="match status" value="1"/>
</dbReference>
<accession>Q93VV5</accession>
<accession>Q9XIF3</accession>
<proteinExistence type="evidence at transcript level"/>
<evidence type="ECO:0000250" key="1"/>
<evidence type="ECO:0000255" key="2"/>
<evidence type="ECO:0000256" key="3">
    <source>
        <dbReference type="SAM" id="MobiDB-lite"/>
    </source>
</evidence>
<evidence type="ECO:0000269" key="4">
    <source>
    </source>
</evidence>
<evidence type="ECO:0000269" key="5">
    <source>
    </source>
</evidence>
<evidence type="ECO:0000305" key="6"/>
<reference key="1">
    <citation type="journal article" date="2000" name="Nature">
        <title>Sequence and analysis of chromosome 1 of the plant Arabidopsis thaliana.</title>
        <authorList>
            <person name="Theologis A."/>
            <person name="Ecker J.R."/>
            <person name="Palm C.J."/>
            <person name="Federspiel N.A."/>
            <person name="Kaul S."/>
            <person name="White O."/>
            <person name="Alonso J."/>
            <person name="Altafi H."/>
            <person name="Araujo R."/>
            <person name="Bowman C.L."/>
            <person name="Brooks S.Y."/>
            <person name="Buehler E."/>
            <person name="Chan A."/>
            <person name="Chao Q."/>
            <person name="Chen H."/>
            <person name="Cheuk R.F."/>
            <person name="Chin C.W."/>
            <person name="Chung M.K."/>
            <person name="Conn L."/>
            <person name="Conway A.B."/>
            <person name="Conway A.R."/>
            <person name="Creasy T.H."/>
            <person name="Dewar K."/>
            <person name="Dunn P."/>
            <person name="Etgu P."/>
            <person name="Feldblyum T.V."/>
            <person name="Feng J.-D."/>
            <person name="Fong B."/>
            <person name="Fujii C.Y."/>
            <person name="Gill J.E."/>
            <person name="Goldsmith A.D."/>
            <person name="Haas B."/>
            <person name="Hansen N.F."/>
            <person name="Hughes B."/>
            <person name="Huizar L."/>
            <person name="Hunter J.L."/>
            <person name="Jenkins J."/>
            <person name="Johnson-Hopson C."/>
            <person name="Khan S."/>
            <person name="Khaykin E."/>
            <person name="Kim C.J."/>
            <person name="Koo H.L."/>
            <person name="Kremenetskaia I."/>
            <person name="Kurtz D.B."/>
            <person name="Kwan A."/>
            <person name="Lam B."/>
            <person name="Langin-Hooper S."/>
            <person name="Lee A."/>
            <person name="Lee J.M."/>
            <person name="Lenz C.A."/>
            <person name="Li J.H."/>
            <person name="Li Y.-P."/>
            <person name="Lin X."/>
            <person name="Liu S.X."/>
            <person name="Liu Z.A."/>
            <person name="Luros J.S."/>
            <person name="Maiti R."/>
            <person name="Marziali A."/>
            <person name="Militscher J."/>
            <person name="Miranda M."/>
            <person name="Nguyen M."/>
            <person name="Nierman W.C."/>
            <person name="Osborne B.I."/>
            <person name="Pai G."/>
            <person name="Peterson J."/>
            <person name="Pham P.K."/>
            <person name="Rizzo M."/>
            <person name="Rooney T."/>
            <person name="Rowley D."/>
            <person name="Sakano H."/>
            <person name="Salzberg S.L."/>
            <person name="Schwartz J.R."/>
            <person name="Shinn P."/>
            <person name="Southwick A.M."/>
            <person name="Sun H."/>
            <person name="Tallon L.J."/>
            <person name="Tambunga G."/>
            <person name="Toriumi M.J."/>
            <person name="Town C.D."/>
            <person name="Utterback T."/>
            <person name="Van Aken S."/>
            <person name="Vaysberg M."/>
            <person name="Vysotskaia V.S."/>
            <person name="Walker M."/>
            <person name="Wu D."/>
            <person name="Yu G."/>
            <person name="Fraser C.M."/>
            <person name="Venter J.C."/>
            <person name="Davis R.W."/>
        </authorList>
    </citation>
    <scope>NUCLEOTIDE SEQUENCE [LARGE SCALE GENOMIC DNA]</scope>
    <source>
        <strain>cv. Columbia</strain>
    </source>
</reference>
<reference key="2">
    <citation type="journal article" date="2017" name="Plant J.">
        <title>Araport11: a complete reannotation of the Arabidopsis thaliana reference genome.</title>
        <authorList>
            <person name="Cheng C.Y."/>
            <person name="Krishnakumar V."/>
            <person name="Chan A.P."/>
            <person name="Thibaud-Nissen F."/>
            <person name="Schobel S."/>
            <person name="Town C.D."/>
        </authorList>
    </citation>
    <scope>GENOME REANNOTATION</scope>
    <source>
        <strain>cv. Columbia</strain>
    </source>
</reference>
<reference key="3">
    <citation type="journal article" date="2003" name="Science">
        <title>Empirical analysis of transcriptional activity in the Arabidopsis genome.</title>
        <authorList>
            <person name="Yamada K."/>
            <person name="Lim J."/>
            <person name="Dale J.M."/>
            <person name="Chen H."/>
            <person name="Shinn P."/>
            <person name="Palm C.J."/>
            <person name="Southwick A.M."/>
            <person name="Wu H.C."/>
            <person name="Kim C.J."/>
            <person name="Nguyen M."/>
            <person name="Pham P.K."/>
            <person name="Cheuk R.F."/>
            <person name="Karlin-Newmann G."/>
            <person name="Liu S.X."/>
            <person name="Lam B."/>
            <person name="Sakano H."/>
            <person name="Wu T."/>
            <person name="Yu G."/>
            <person name="Miranda M."/>
            <person name="Quach H.L."/>
            <person name="Tripp M."/>
            <person name="Chang C.H."/>
            <person name="Lee J.M."/>
            <person name="Toriumi M.J."/>
            <person name="Chan M.M."/>
            <person name="Tang C.C."/>
            <person name="Onodera C.S."/>
            <person name="Deng J.M."/>
            <person name="Akiyama K."/>
            <person name="Ansari Y."/>
            <person name="Arakawa T."/>
            <person name="Banh J."/>
            <person name="Banno F."/>
            <person name="Bowser L."/>
            <person name="Brooks S.Y."/>
            <person name="Carninci P."/>
            <person name="Chao Q."/>
            <person name="Choy N."/>
            <person name="Enju A."/>
            <person name="Goldsmith A.D."/>
            <person name="Gurjal M."/>
            <person name="Hansen N.F."/>
            <person name="Hayashizaki Y."/>
            <person name="Johnson-Hopson C."/>
            <person name="Hsuan V.W."/>
            <person name="Iida K."/>
            <person name="Karnes M."/>
            <person name="Khan S."/>
            <person name="Koesema E."/>
            <person name="Ishida J."/>
            <person name="Jiang P.X."/>
            <person name="Jones T."/>
            <person name="Kawai J."/>
            <person name="Kamiya A."/>
            <person name="Meyers C."/>
            <person name="Nakajima M."/>
            <person name="Narusaka M."/>
            <person name="Seki M."/>
            <person name="Sakurai T."/>
            <person name="Satou M."/>
            <person name="Tamse R."/>
            <person name="Vaysberg M."/>
            <person name="Wallender E.K."/>
            <person name="Wong C."/>
            <person name="Yamamura Y."/>
            <person name="Yuan S."/>
            <person name="Shinozaki K."/>
            <person name="Davis R.W."/>
            <person name="Theologis A."/>
            <person name="Ecker J.R."/>
        </authorList>
    </citation>
    <scope>NUCLEOTIDE SEQUENCE [LARGE SCALE MRNA]</scope>
    <source>
        <strain>cv. Columbia</strain>
    </source>
</reference>
<reference key="4">
    <citation type="journal article" date="2005" name="Mol. Plant Microbe Interact.">
        <title>Nematode-induced changes of transporter gene expression in Arabidopsis roots.</title>
        <authorList>
            <person name="Hammes U.Z."/>
            <person name="Schachtman D.P."/>
            <person name="Berg R.H."/>
            <person name="Nielsen E."/>
            <person name="Koch W."/>
            <person name="McIntyre L.M."/>
            <person name="Taylor C.G."/>
        </authorList>
    </citation>
    <scope>INDUCTION BY NEMATODES</scope>
</reference>
<reference key="5">
    <citation type="journal article" date="2007" name="FEBS Lett.">
        <title>Nitrate transporters and peptide transporters.</title>
        <authorList>
            <person name="Tsay Y.F."/>
            <person name="Chiu C.C."/>
            <person name="Tsai C.B."/>
            <person name="Ho C.H."/>
            <person name="Hsu P.K."/>
        </authorList>
    </citation>
    <scope>TISSUE SPECIFICITY</scope>
    <scope>GENE FAMILY</scope>
</reference>
<reference key="6">
    <citation type="journal article" date="2010" name="Plant Cell">
        <title>The Arabidopsis nitrate transporter NRT1.8 functions in nitrate removal from the xylem sap and mediates cadmium tolerance.</title>
        <authorList>
            <person name="Li J.Y."/>
            <person name="Fu Y.L."/>
            <person name="Pike S.M."/>
            <person name="Bao J."/>
            <person name="Tian W."/>
            <person name="Zhang Y."/>
            <person name="Chen C.Z."/>
            <person name="Zhang Y."/>
            <person name="Li H.M."/>
            <person name="Huang J."/>
            <person name="Li L.G."/>
            <person name="Schroeder J.I."/>
            <person name="Gassmann W."/>
            <person name="Gong J.M."/>
        </authorList>
    </citation>
    <scope>GENE FAMILY</scope>
</reference>
<reference key="7">
    <citation type="journal article" date="2014" name="Trends Plant Sci.">
        <title>A unified nomenclature of NITRATE TRANSPORTER 1/PEPTIDE TRANSPORTER family members in plants.</title>
        <authorList>
            <person name="Leran S."/>
            <person name="Varala K."/>
            <person name="Boyer J.C."/>
            <person name="Chiurazzi M."/>
            <person name="Crawford N."/>
            <person name="Daniel-Vedele F."/>
            <person name="David L."/>
            <person name="Dickstein R."/>
            <person name="Fernandez E."/>
            <person name="Forde B."/>
            <person name="Gassmann W."/>
            <person name="Geiger D."/>
            <person name="Gojon A."/>
            <person name="Gong J.M."/>
            <person name="Halkier B.A."/>
            <person name="Harris J.M."/>
            <person name="Hedrich R."/>
            <person name="Limami A.M."/>
            <person name="Rentsch D."/>
            <person name="Seo M."/>
            <person name="Tsay Y.F."/>
            <person name="Zhang M."/>
            <person name="Coruzzi G."/>
            <person name="Lacombe B."/>
        </authorList>
    </citation>
    <scope>GENE FAMILY</scope>
    <scope>NOMENCLATURE</scope>
</reference>
<sequence length="591" mass="66042">MAEINKQSNKWEQEEVSNENNWELAEEESVDWRGRPSNPNKHGGMRAALFVLGLQAFEIMGIAAVGNNLITYVINEMHFPLSKAANIVTNFVGTIFIFALLGGYLSDAFLGSFWTIIIFGFVELSGFILLSVQAHLPQLKPPKCNPLIDQTCEEAKGFKAMIFFMALYLVALGSGCVKPNMIAHGADQFSQSHPKQSKRLSSYFNAAYFAFSMGELIALTLLVWVQTHSGMDIGFGVSAAAMTMGIISLVSGTMYFRNKRPRRSIFTPIAHVIVAAILKRKLASPSDPRMLHGDHHVANDVVPSSTLPHTPRFRFLDKACIKIQDTNTKESPWRLCTVTQVEQVKTLISLVPIFASTIVFNTILAQLQTFSVQQGSSMNTRLSNSFHIPPASLQAIPYIMLIFLVPLYDSFLVPFARKLTGHNSGIPPLTRIGIGLFLSTFSMVSAAMLEKKRRDSSVLDGRILSIFWITPQFLIFGISEMFTAVGLIEFFYKQSAKGMESFLMALTYCSYSFGFYFSSVLVSVVNKITSTSVDSKGWLGENDLNKDRLDLFYWLLAVLSLLNFLSYLFWSRWNIKSSRRNNTNVVGDENI</sequence>
<keyword id="KW-0472">Membrane</keyword>
<keyword id="KW-1185">Reference proteome</keyword>
<keyword id="KW-0812">Transmembrane</keyword>
<keyword id="KW-1133">Transmembrane helix</keyword>
<keyword id="KW-0813">Transport</keyword>
<name>PTR16_ARATH</name>
<comment type="subcellular location">
    <subcellularLocation>
        <location evidence="1">Membrane</location>
        <topology evidence="1">Multi-pass membrane protein</topology>
    </subcellularLocation>
</comment>
<comment type="tissue specificity">
    <text evidence="5">Expressed in flowers. Detected in roots and siliques.</text>
</comment>
<comment type="induction">
    <text evidence="4">Down-regulated upon nematode infection.</text>
</comment>
<comment type="similarity">
    <text evidence="6">Belongs to the major facilitator superfamily. Proton-dependent oligopeptide transporter (POT/PTR) (TC 2.A.17) family.</text>
</comment>
<comment type="sequence caution" evidence="6">
    <conflict type="erroneous gene model prediction">
        <sequence resource="EMBL-CDS" id="AAD39317"/>
    </conflict>
</comment>
<feature type="chain" id="PRO_0000399950" description="Protein NRT1/ PTR FAMILY 4.3">
    <location>
        <begin position="1"/>
        <end position="591"/>
    </location>
</feature>
<feature type="transmembrane region" description="Helical" evidence="2">
    <location>
        <begin position="47"/>
        <end position="67"/>
    </location>
</feature>
<feature type="transmembrane region" description="Helical" evidence="2">
    <location>
        <begin position="85"/>
        <end position="105"/>
    </location>
</feature>
<feature type="transmembrane region" description="Helical" evidence="2">
    <location>
        <begin position="109"/>
        <end position="129"/>
    </location>
</feature>
<feature type="transmembrane region" description="Helical" evidence="2">
    <location>
        <begin position="157"/>
        <end position="177"/>
    </location>
</feature>
<feature type="transmembrane region" description="Helical" evidence="2">
    <location>
        <begin position="204"/>
        <end position="224"/>
    </location>
</feature>
<feature type="transmembrane region" description="Helical" evidence="2">
    <location>
        <begin position="233"/>
        <end position="253"/>
    </location>
</feature>
<feature type="transmembrane region" description="Helical" evidence="2">
    <location>
        <begin position="347"/>
        <end position="367"/>
    </location>
</feature>
<feature type="transmembrane region" description="Helical" evidence="2">
    <location>
        <begin position="395"/>
        <end position="415"/>
    </location>
</feature>
<feature type="transmembrane region" description="Helical" evidence="2">
    <location>
        <begin position="429"/>
        <end position="449"/>
    </location>
</feature>
<feature type="transmembrane region" description="Helical" evidence="2">
    <location>
        <begin position="463"/>
        <end position="483"/>
    </location>
</feature>
<feature type="transmembrane region" description="Helical" evidence="2">
    <location>
        <begin position="502"/>
        <end position="522"/>
    </location>
</feature>
<feature type="transmembrane region" description="Helical" evidence="2">
    <location>
        <begin position="551"/>
        <end position="571"/>
    </location>
</feature>
<feature type="region of interest" description="Disordered" evidence="3">
    <location>
        <begin position="1"/>
        <end position="38"/>
    </location>
</feature>
<feature type="compositionally biased region" description="Polar residues" evidence="3">
    <location>
        <begin position="1"/>
        <end position="10"/>
    </location>
</feature>